<organism>
    <name type="scientific">Aeropyrum pernix (strain ATCC 700893 / DSM 11879 / JCM 9820 / NBRC 100138 / K1)</name>
    <dbReference type="NCBI Taxonomy" id="272557"/>
    <lineage>
        <taxon>Archaea</taxon>
        <taxon>Thermoproteota</taxon>
        <taxon>Thermoprotei</taxon>
        <taxon>Desulfurococcales</taxon>
        <taxon>Desulfurococcaceae</taxon>
        <taxon>Aeropyrum</taxon>
    </lineage>
</organism>
<protein>
    <recommendedName>
        <fullName evidence="1">Pyridoxal 5'-phosphate synthase subunit PdxT</fullName>
        <ecNumber evidence="1">4.3.3.6</ecNumber>
    </recommendedName>
    <alternativeName>
        <fullName evidence="1">Pdx2</fullName>
    </alternativeName>
    <alternativeName>
        <fullName evidence="1">Pyridoxal 5'-phosphate synthase glutaminase subunit</fullName>
        <ecNumber evidence="1">3.5.1.2</ecNumber>
    </alternativeName>
</protein>
<dbReference type="EC" id="4.3.3.6" evidence="1"/>
<dbReference type="EC" id="3.5.1.2" evidence="1"/>
<dbReference type="EMBL" id="BA000002">
    <property type="protein sequence ID" value="BAA79157.2"/>
    <property type="molecule type" value="Genomic_DNA"/>
</dbReference>
<dbReference type="PIR" id="C72782">
    <property type="entry name" value="C72782"/>
</dbReference>
<dbReference type="RefSeq" id="WP_010865598.1">
    <property type="nucleotide sequence ID" value="NC_000854.2"/>
</dbReference>
<dbReference type="SMR" id="Q9YFK4"/>
<dbReference type="STRING" id="272557.APE_0244.1"/>
<dbReference type="EnsemblBacteria" id="BAA79157">
    <property type="protein sequence ID" value="BAA79157"/>
    <property type="gene ID" value="APE_0244.1"/>
</dbReference>
<dbReference type="GeneID" id="1445760"/>
<dbReference type="KEGG" id="ape:APE_0244.1"/>
<dbReference type="PATRIC" id="fig|272557.25.peg.177"/>
<dbReference type="eggNOG" id="arCOG00034">
    <property type="taxonomic scope" value="Archaea"/>
</dbReference>
<dbReference type="UniPathway" id="UPA00245"/>
<dbReference type="Proteomes" id="UP000002518">
    <property type="component" value="Chromosome"/>
</dbReference>
<dbReference type="GO" id="GO:0005829">
    <property type="term" value="C:cytosol"/>
    <property type="evidence" value="ECO:0007669"/>
    <property type="project" value="TreeGrafter"/>
</dbReference>
<dbReference type="GO" id="GO:1903600">
    <property type="term" value="C:glutaminase complex"/>
    <property type="evidence" value="ECO:0007669"/>
    <property type="project" value="TreeGrafter"/>
</dbReference>
<dbReference type="GO" id="GO:0004359">
    <property type="term" value="F:glutaminase activity"/>
    <property type="evidence" value="ECO:0007669"/>
    <property type="project" value="UniProtKB-UniRule"/>
</dbReference>
<dbReference type="GO" id="GO:0036381">
    <property type="term" value="F:pyridoxal 5'-phosphate synthase (glutamine hydrolysing) activity"/>
    <property type="evidence" value="ECO:0007669"/>
    <property type="project" value="UniProtKB-UniRule"/>
</dbReference>
<dbReference type="GO" id="GO:0006543">
    <property type="term" value="P:glutamine catabolic process"/>
    <property type="evidence" value="ECO:0007669"/>
    <property type="project" value="UniProtKB-UniRule"/>
</dbReference>
<dbReference type="GO" id="GO:0042823">
    <property type="term" value="P:pyridoxal phosphate biosynthetic process"/>
    <property type="evidence" value="ECO:0007669"/>
    <property type="project" value="UniProtKB-UniRule"/>
</dbReference>
<dbReference type="GO" id="GO:0008614">
    <property type="term" value="P:pyridoxine metabolic process"/>
    <property type="evidence" value="ECO:0007669"/>
    <property type="project" value="TreeGrafter"/>
</dbReference>
<dbReference type="CDD" id="cd01749">
    <property type="entry name" value="GATase1_PB"/>
    <property type="match status" value="1"/>
</dbReference>
<dbReference type="FunFam" id="3.40.50.880:FF:000041">
    <property type="entry name" value="Glutamine amidotransferase subunit pdxT, putative"/>
    <property type="match status" value="1"/>
</dbReference>
<dbReference type="Gene3D" id="3.40.50.880">
    <property type="match status" value="1"/>
</dbReference>
<dbReference type="HAMAP" id="MF_01615">
    <property type="entry name" value="PdxT"/>
    <property type="match status" value="1"/>
</dbReference>
<dbReference type="InterPro" id="IPR029062">
    <property type="entry name" value="Class_I_gatase-like"/>
</dbReference>
<dbReference type="InterPro" id="IPR002161">
    <property type="entry name" value="PdxT/SNO"/>
</dbReference>
<dbReference type="InterPro" id="IPR021196">
    <property type="entry name" value="PdxT/SNO_CS"/>
</dbReference>
<dbReference type="NCBIfam" id="TIGR03800">
    <property type="entry name" value="PLP_synth_Pdx2"/>
    <property type="match status" value="1"/>
</dbReference>
<dbReference type="PANTHER" id="PTHR31559">
    <property type="entry name" value="PYRIDOXAL 5'-PHOSPHATE SYNTHASE SUBUNIT SNO"/>
    <property type="match status" value="1"/>
</dbReference>
<dbReference type="PANTHER" id="PTHR31559:SF0">
    <property type="entry name" value="PYRIDOXAL 5'-PHOSPHATE SYNTHASE SUBUNIT SNO1-RELATED"/>
    <property type="match status" value="1"/>
</dbReference>
<dbReference type="Pfam" id="PF01174">
    <property type="entry name" value="SNO"/>
    <property type="match status" value="1"/>
</dbReference>
<dbReference type="PIRSF" id="PIRSF005639">
    <property type="entry name" value="Glut_amidoT_SNO"/>
    <property type="match status" value="1"/>
</dbReference>
<dbReference type="SUPFAM" id="SSF52317">
    <property type="entry name" value="Class I glutamine amidotransferase-like"/>
    <property type="match status" value="1"/>
</dbReference>
<dbReference type="PROSITE" id="PS01236">
    <property type="entry name" value="PDXT_SNO_1"/>
    <property type="match status" value="1"/>
</dbReference>
<dbReference type="PROSITE" id="PS51130">
    <property type="entry name" value="PDXT_SNO_2"/>
    <property type="match status" value="1"/>
</dbReference>
<keyword id="KW-0315">Glutamine amidotransferase</keyword>
<keyword id="KW-0378">Hydrolase</keyword>
<keyword id="KW-0456">Lyase</keyword>
<keyword id="KW-0663">Pyridoxal phosphate</keyword>
<keyword id="KW-1185">Reference proteome</keyword>
<evidence type="ECO:0000255" key="1">
    <source>
        <dbReference type="HAMAP-Rule" id="MF_01615"/>
    </source>
</evidence>
<comment type="function">
    <text evidence="1">Catalyzes the hydrolysis of glutamine to glutamate and ammonia as part of the biosynthesis of pyridoxal 5'-phosphate. The resulting ammonia molecule is channeled to the active site of PdxS.</text>
</comment>
<comment type="catalytic activity">
    <reaction evidence="1">
        <text>aldehydo-D-ribose 5-phosphate + D-glyceraldehyde 3-phosphate + L-glutamine = pyridoxal 5'-phosphate + L-glutamate + phosphate + 3 H2O + H(+)</text>
        <dbReference type="Rhea" id="RHEA:31507"/>
        <dbReference type="ChEBI" id="CHEBI:15377"/>
        <dbReference type="ChEBI" id="CHEBI:15378"/>
        <dbReference type="ChEBI" id="CHEBI:29985"/>
        <dbReference type="ChEBI" id="CHEBI:43474"/>
        <dbReference type="ChEBI" id="CHEBI:58273"/>
        <dbReference type="ChEBI" id="CHEBI:58359"/>
        <dbReference type="ChEBI" id="CHEBI:59776"/>
        <dbReference type="ChEBI" id="CHEBI:597326"/>
        <dbReference type="EC" id="4.3.3.6"/>
    </reaction>
</comment>
<comment type="catalytic activity">
    <reaction evidence="1">
        <text>L-glutamine + H2O = L-glutamate + NH4(+)</text>
        <dbReference type="Rhea" id="RHEA:15889"/>
        <dbReference type="ChEBI" id="CHEBI:15377"/>
        <dbReference type="ChEBI" id="CHEBI:28938"/>
        <dbReference type="ChEBI" id="CHEBI:29985"/>
        <dbReference type="ChEBI" id="CHEBI:58359"/>
        <dbReference type="EC" id="3.5.1.2"/>
    </reaction>
</comment>
<comment type="pathway">
    <text evidence="1">Cofactor biosynthesis; pyridoxal 5'-phosphate biosynthesis.</text>
</comment>
<comment type="subunit">
    <text evidence="1">In the presence of PdxS, forms a dodecamer of heterodimers. Only shows activity in the heterodimer.</text>
</comment>
<comment type="similarity">
    <text evidence="1">Belongs to the glutaminase PdxT/SNO family.</text>
</comment>
<feature type="chain" id="PRO_0000135676" description="Pyridoxal 5'-phosphate synthase subunit PdxT">
    <location>
        <begin position="1"/>
        <end position="203"/>
    </location>
</feature>
<feature type="active site" description="Nucleophile" evidence="1">
    <location>
        <position position="84"/>
    </location>
</feature>
<feature type="active site" description="Charge relay system" evidence="1">
    <location>
        <position position="184"/>
    </location>
</feature>
<feature type="active site" description="Charge relay system" evidence="1">
    <location>
        <position position="186"/>
    </location>
</feature>
<feature type="binding site" evidence="1">
    <location>
        <begin position="52"/>
        <end position="54"/>
    </location>
    <ligand>
        <name>L-glutamine</name>
        <dbReference type="ChEBI" id="CHEBI:58359"/>
    </ligand>
</feature>
<feature type="binding site" evidence="1">
    <location>
        <position position="116"/>
    </location>
    <ligand>
        <name>L-glutamine</name>
        <dbReference type="ChEBI" id="CHEBI:58359"/>
    </ligand>
</feature>
<feature type="binding site" evidence="1">
    <location>
        <begin position="144"/>
        <end position="145"/>
    </location>
    <ligand>
        <name>L-glutamine</name>
        <dbReference type="ChEBI" id="CHEBI:58359"/>
    </ligand>
</feature>
<accession>Q9YFK4</accession>
<gene>
    <name evidence="1" type="primary">pdxT</name>
    <name type="ordered locus">APE_0244.1</name>
</gene>
<reference key="1">
    <citation type="journal article" date="1999" name="DNA Res.">
        <title>Complete genome sequence of an aerobic hyper-thermophilic crenarchaeon, Aeropyrum pernix K1.</title>
        <authorList>
            <person name="Kawarabayasi Y."/>
            <person name="Hino Y."/>
            <person name="Horikawa H."/>
            <person name="Yamazaki S."/>
            <person name="Haikawa Y."/>
            <person name="Jin-no K."/>
            <person name="Takahashi M."/>
            <person name="Sekine M."/>
            <person name="Baba S."/>
            <person name="Ankai A."/>
            <person name="Kosugi H."/>
            <person name="Hosoyama A."/>
            <person name="Fukui S."/>
            <person name="Nagai Y."/>
            <person name="Nishijima K."/>
            <person name="Nakazawa H."/>
            <person name="Takamiya M."/>
            <person name="Masuda S."/>
            <person name="Funahashi T."/>
            <person name="Tanaka T."/>
            <person name="Kudoh Y."/>
            <person name="Yamazaki J."/>
            <person name="Kushida N."/>
            <person name="Oguchi A."/>
            <person name="Aoki K."/>
            <person name="Kubota K."/>
            <person name="Nakamura Y."/>
            <person name="Nomura N."/>
            <person name="Sako Y."/>
            <person name="Kikuchi H."/>
        </authorList>
    </citation>
    <scope>NUCLEOTIDE SEQUENCE [LARGE SCALE GENOMIC DNA]</scope>
    <source>
        <strain>ATCC 700893 / DSM 11879 / JCM 9820 / NBRC 100138 / K1</strain>
    </source>
</reference>
<name>PDXT_AERPE</name>
<proteinExistence type="inferred from homology"/>
<sequence>MRIGVLGYQGGVYEHVYMLRRTFDRLGVHGEAVVVKKPEDLKGLDGVIIPGGESTTIGILAKRLGVLEPLREQVLNGLPAMGTCAGAIILAGKVRDKVVGEKSQPLLGVMRVEVVRNFFGRQRESFEADLEIEGLDGRFRGVFIRSPAITAAESPARIISWLDYNGQRVGVAAVQGPLLATSFHPELTGDTRLHELWLRLVKR</sequence>